<sequence>MTIIYGQDIGLIHQKLSQIKSNSPYKTIWFKDLKQLYDLFSQPLFGSNNEKFIVNNCSFLEKTSLTRQENLCLEKLKTTDVVLTVYTDNPFSGIKTIKSITTVFCDKLDWKSMHKAIGEVCRELNLKLDLEIIDWLANALPLNMGVIYQEINKLSLLGKNEIKDNKLVETVICDYQPVQIYKLTKALTNSQIVKAFKYIDELASTKPNFATQFLEFFSGELLLALMVKSCNPKQLTNINLNVNQFRLIAIQSQYHNFTSKVLVNIINAIQKLDIKLKHNDGFAIPLLKNFALSFFTN</sequence>
<protein>
    <recommendedName>
        <fullName evidence="3">Probable DNA polymerase III subunit delta</fullName>
        <ecNumber>2.7.7.7</ecNumber>
    </recommendedName>
</protein>
<comment type="function">
    <text evidence="1">Part of the beta sliding clamp loading complex, which hydrolyzes ATP to load the beta clamp onto primed DNA to form the DNA replication pre-initiation complex. DNA polymerase III is a complex, multichain enzyme responsible for most of the replicative synthesis in bacteria. This DNA polymerase also exhibits 3'-5' exonuclease activity. The delta subunit is the wrench that will open the beta subunit dimer. The DNA clamp loading complex (tau(3),delta,delta') is thought to load beta dimers onto DNA by binding ATP which alters the complex's conformation so it can bind beta sliding clamp dimers and open them at one interface. Primed DNA is recognized, ATP is hydrolyzed releasing the clamp loading complex and closing the beta sliding clamp ring around the primed DNA.</text>
</comment>
<comment type="catalytic activity">
    <reaction>
        <text>DNA(n) + a 2'-deoxyribonucleoside 5'-triphosphate = DNA(n+1) + diphosphate</text>
        <dbReference type="Rhea" id="RHEA:22508"/>
        <dbReference type="Rhea" id="RHEA-COMP:17339"/>
        <dbReference type="Rhea" id="RHEA-COMP:17340"/>
        <dbReference type="ChEBI" id="CHEBI:33019"/>
        <dbReference type="ChEBI" id="CHEBI:61560"/>
        <dbReference type="ChEBI" id="CHEBI:173112"/>
        <dbReference type="EC" id="2.7.7.7"/>
    </reaction>
</comment>
<comment type="subunit">
    <text evidence="1 2">Component of the DNA clamp loading complex consisting of tau(3):delta(1):delta'(1) (By similarity). The DNA polymerase III holoenzyme complex contains at least 10 different subunits organized into 3 functionally essential subassemblies: the Pol III core, the beta sliding clamp processivity factor and the clamp-loading complex. The Pol III core (subunits alpha, epsilon and theta) contains the polymerase and the 3'-5' exonuclease proofreading activities. The polymerase is tethered to the template via the dimeric beta sliding clamp processivity factor. The DNA clamp-loading complex assembles the beta sliding clamp onto the primed template and plays a central role in the organization and communication at the replication fork (By similarity).</text>
</comment>
<comment type="similarity">
    <text evidence="3">Belongs to the DNA polymerase HolA subunit family.</text>
</comment>
<accession>Q49416</accession>
<organism>
    <name type="scientific">Mycoplasma genitalium (strain ATCC 33530 / DSM 19775 / NCTC 10195 / G37)</name>
    <name type="common">Mycoplasmoides genitalium</name>
    <dbReference type="NCBI Taxonomy" id="243273"/>
    <lineage>
        <taxon>Bacteria</taxon>
        <taxon>Bacillati</taxon>
        <taxon>Mycoplasmatota</taxon>
        <taxon>Mycoplasmoidales</taxon>
        <taxon>Mycoplasmoidaceae</taxon>
        <taxon>Mycoplasmoides</taxon>
    </lineage>
</organism>
<proteinExistence type="inferred from homology"/>
<keyword id="KW-0235">DNA replication</keyword>
<keyword id="KW-0239">DNA-directed DNA polymerase</keyword>
<keyword id="KW-0548">Nucleotidyltransferase</keyword>
<keyword id="KW-1185">Reference proteome</keyword>
<keyword id="KW-0808">Transferase</keyword>
<name>HOLA_MYCGE</name>
<feature type="chain" id="PRO_0000210530" description="Probable DNA polymerase III subunit delta">
    <location>
        <begin position="1"/>
        <end position="297"/>
    </location>
</feature>
<gene>
    <name evidence="3" type="primary">holA</name>
    <name type="ordered locus">MG315</name>
</gene>
<reference key="1">
    <citation type="journal article" date="1995" name="Science">
        <title>The minimal gene complement of Mycoplasma genitalium.</title>
        <authorList>
            <person name="Fraser C.M."/>
            <person name="Gocayne J.D."/>
            <person name="White O."/>
            <person name="Adams M.D."/>
            <person name="Clayton R.A."/>
            <person name="Fleischmann R.D."/>
            <person name="Bult C.J."/>
            <person name="Kerlavage A.R."/>
            <person name="Sutton G.G."/>
            <person name="Kelley J.M."/>
            <person name="Fritchman J.L."/>
            <person name="Weidman J.F."/>
            <person name="Small K.V."/>
            <person name="Sandusky M."/>
            <person name="Fuhrmann J.L."/>
            <person name="Nguyen D.T."/>
            <person name="Utterback T.R."/>
            <person name="Saudek D.M."/>
            <person name="Phillips C.A."/>
            <person name="Merrick J.M."/>
            <person name="Tomb J.-F."/>
            <person name="Dougherty B.A."/>
            <person name="Bott K.F."/>
            <person name="Hu P.-C."/>
            <person name="Lucier T.S."/>
            <person name="Peterson S.N."/>
            <person name="Smith H.O."/>
            <person name="Hutchison C.A. III"/>
            <person name="Venter J.C."/>
        </authorList>
    </citation>
    <scope>NUCLEOTIDE SEQUENCE [LARGE SCALE GENOMIC DNA]</scope>
    <source>
        <strain>ATCC 33530 / DSM 19775 / NCTC 10195 / G37</strain>
    </source>
</reference>
<dbReference type="EC" id="2.7.7.7"/>
<dbReference type="EMBL" id="L43967">
    <property type="protein sequence ID" value="AAC71537.1"/>
    <property type="molecule type" value="Genomic_DNA"/>
</dbReference>
<dbReference type="PIR" id="H64234">
    <property type="entry name" value="H64234"/>
</dbReference>
<dbReference type="RefSeq" id="WP_009885989.1">
    <property type="nucleotide sequence ID" value="NC_000908.2"/>
</dbReference>
<dbReference type="SMR" id="Q49416"/>
<dbReference type="STRING" id="243273.MG_315"/>
<dbReference type="GeneID" id="88282478"/>
<dbReference type="KEGG" id="mge:MG_315"/>
<dbReference type="eggNOG" id="COG1466">
    <property type="taxonomic scope" value="Bacteria"/>
</dbReference>
<dbReference type="HOGENOM" id="CLU_1014966_0_0_14"/>
<dbReference type="InParanoid" id="Q49416"/>
<dbReference type="OrthoDB" id="397852at2"/>
<dbReference type="BioCyc" id="MGEN243273:G1GJ2-384-MONOMER"/>
<dbReference type="Proteomes" id="UP000000807">
    <property type="component" value="Chromosome"/>
</dbReference>
<dbReference type="GO" id="GO:0009360">
    <property type="term" value="C:DNA polymerase III complex"/>
    <property type="evidence" value="ECO:0000318"/>
    <property type="project" value="GO_Central"/>
</dbReference>
<dbReference type="GO" id="GO:0003677">
    <property type="term" value="F:DNA binding"/>
    <property type="evidence" value="ECO:0007669"/>
    <property type="project" value="InterPro"/>
</dbReference>
<dbReference type="GO" id="GO:0003887">
    <property type="term" value="F:DNA-directed DNA polymerase activity"/>
    <property type="evidence" value="ECO:0007669"/>
    <property type="project" value="UniProtKB-KW"/>
</dbReference>
<dbReference type="GO" id="GO:0006261">
    <property type="term" value="P:DNA-templated DNA replication"/>
    <property type="evidence" value="ECO:0000318"/>
    <property type="project" value="GO_Central"/>
</dbReference>
<dbReference type="Gene3D" id="1.20.272.10">
    <property type="match status" value="1"/>
</dbReference>
<dbReference type="InterPro" id="IPR008921">
    <property type="entry name" value="DNA_pol3_clamp-load_cplx_C"/>
</dbReference>
<dbReference type="InterPro" id="IPR005790">
    <property type="entry name" value="DNA_polIII_delta"/>
</dbReference>
<dbReference type="NCBIfam" id="TIGR01128">
    <property type="entry name" value="holA"/>
    <property type="match status" value="1"/>
</dbReference>
<dbReference type="PANTHER" id="PTHR34388">
    <property type="entry name" value="DNA POLYMERASE III SUBUNIT DELTA"/>
    <property type="match status" value="1"/>
</dbReference>
<dbReference type="PANTHER" id="PTHR34388:SF1">
    <property type="entry name" value="DNA POLYMERASE III SUBUNIT DELTA"/>
    <property type="match status" value="1"/>
</dbReference>
<dbReference type="SUPFAM" id="SSF48019">
    <property type="entry name" value="post-AAA+ oligomerization domain-like"/>
    <property type="match status" value="1"/>
</dbReference>
<evidence type="ECO:0000250" key="1">
    <source>
        <dbReference type="UniProtKB" id="P28630"/>
    </source>
</evidence>
<evidence type="ECO:0000250" key="2">
    <source>
        <dbReference type="UniProtKB" id="P54459"/>
    </source>
</evidence>
<evidence type="ECO:0000305" key="3"/>